<comment type="catalytic activity">
    <reaction>
        <text>tRNA(Asp) + L-aspartate + ATP = L-aspartyl-tRNA(Asp) + AMP + diphosphate</text>
        <dbReference type="Rhea" id="RHEA:19649"/>
        <dbReference type="Rhea" id="RHEA-COMP:9660"/>
        <dbReference type="Rhea" id="RHEA-COMP:9678"/>
        <dbReference type="ChEBI" id="CHEBI:29991"/>
        <dbReference type="ChEBI" id="CHEBI:30616"/>
        <dbReference type="ChEBI" id="CHEBI:33019"/>
        <dbReference type="ChEBI" id="CHEBI:78442"/>
        <dbReference type="ChEBI" id="CHEBI:78516"/>
        <dbReference type="ChEBI" id="CHEBI:456215"/>
        <dbReference type="EC" id="6.1.1.12"/>
    </reaction>
</comment>
<comment type="subcellular location">
    <subcellularLocation>
        <location evidence="1">Mitochondrion matrix</location>
    </subcellularLocation>
</comment>
<comment type="similarity">
    <text evidence="3">Belongs to the class-II aminoacyl-tRNA synthetase family. Type 1 subfamily.</text>
</comment>
<gene>
    <name type="primary">maspS</name>
    <name type="ORF">DDB_G0270152</name>
</gene>
<evidence type="ECO:0000250" key="1"/>
<evidence type="ECO:0000255" key="2"/>
<evidence type="ECO:0000305" key="3"/>
<accession>Q55C99</accession>
<name>SYDM_DICDI</name>
<organism>
    <name type="scientific">Dictyostelium discoideum</name>
    <name type="common">Social amoeba</name>
    <dbReference type="NCBI Taxonomy" id="44689"/>
    <lineage>
        <taxon>Eukaryota</taxon>
        <taxon>Amoebozoa</taxon>
        <taxon>Evosea</taxon>
        <taxon>Eumycetozoa</taxon>
        <taxon>Dictyostelia</taxon>
        <taxon>Dictyosteliales</taxon>
        <taxon>Dictyosteliaceae</taxon>
        <taxon>Dictyostelium</taxon>
    </lineage>
</organism>
<reference key="1">
    <citation type="journal article" date="2005" name="Nature">
        <title>The genome of the social amoeba Dictyostelium discoideum.</title>
        <authorList>
            <person name="Eichinger L."/>
            <person name="Pachebat J.A."/>
            <person name="Gloeckner G."/>
            <person name="Rajandream M.A."/>
            <person name="Sucgang R."/>
            <person name="Berriman M."/>
            <person name="Song J."/>
            <person name="Olsen R."/>
            <person name="Szafranski K."/>
            <person name="Xu Q."/>
            <person name="Tunggal B."/>
            <person name="Kummerfeld S."/>
            <person name="Madera M."/>
            <person name="Konfortov B.A."/>
            <person name="Rivero F."/>
            <person name="Bankier A.T."/>
            <person name="Lehmann R."/>
            <person name="Hamlin N."/>
            <person name="Davies R."/>
            <person name="Gaudet P."/>
            <person name="Fey P."/>
            <person name="Pilcher K."/>
            <person name="Chen G."/>
            <person name="Saunders D."/>
            <person name="Sodergren E.J."/>
            <person name="Davis P."/>
            <person name="Kerhornou A."/>
            <person name="Nie X."/>
            <person name="Hall N."/>
            <person name="Anjard C."/>
            <person name="Hemphill L."/>
            <person name="Bason N."/>
            <person name="Farbrother P."/>
            <person name="Desany B."/>
            <person name="Just E."/>
            <person name="Morio T."/>
            <person name="Rost R."/>
            <person name="Churcher C.M."/>
            <person name="Cooper J."/>
            <person name="Haydock S."/>
            <person name="van Driessche N."/>
            <person name="Cronin A."/>
            <person name="Goodhead I."/>
            <person name="Muzny D.M."/>
            <person name="Mourier T."/>
            <person name="Pain A."/>
            <person name="Lu M."/>
            <person name="Harper D."/>
            <person name="Lindsay R."/>
            <person name="Hauser H."/>
            <person name="James K.D."/>
            <person name="Quiles M."/>
            <person name="Madan Babu M."/>
            <person name="Saito T."/>
            <person name="Buchrieser C."/>
            <person name="Wardroper A."/>
            <person name="Felder M."/>
            <person name="Thangavelu M."/>
            <person name="Johnson D."/>
            <person name="Knights A."/>
            <person name="Loulseged H."/>
            <person name="Mungall K.L."/>
            <person name="Oliver K."/>
            <person name="Price C."/>
            <person name="Quail M.A."/>
            <person name="Urushihara H."/>
            <person name="Hernandez J."/>
            <person name="Rabbinowitsch E."/>
            <person name="Steffen D."/>
            <person name="Sanders M."/>
            <person name="Ma J."/>
            <person name="Kohara Y."/>
            <person name="Sharp S."/>
            <person name="Simmonds M.N."/>
            <person name="Spiegler S."/>
            <person name="Tivey A."/>
            <person name="Sugano S."/>
            <person name="White B."/>
            <person name="Walker D."/>
            <person name="Woodward J.R."/>
            <person name="Winckler T."/>
            <person name="Tanaka Y."/>
            <person name="Shaulsky G."/>
            <person name="Schleicher M."/>
            <person name="Weinstock G.M."/>
            <person name="Rosenthal A."/>
            <person name="Cox E.C."/>
            <person name="Chisholm R.L."/>
            <person name="Gibbs R.A."/>
            <person name="Loomis W.F."/>
            <person name="Platzer M."/>
            <person name="Kay R.R."/>
            <person name="Williams J.G."/>
            <person name="Dear P.H."/>
            <person name="Noegel A.A."/>
            <person name="Barrell B.G."/>
            <person name="Kuspa A."/>
        </authorList>
    </citation>
    <scope>NUCLEOTIDE SEQUENCE [LARGE SCALE GENOMIC DNA]</scope>
    <source>
        <strain>AX4</strain>
    </source>
</reference>
<feature type="transit peptide" description="Mitochondrion" evidence="2">
    <location>
        <begin position="1"/>
        <end position="61"/>
    </location>
</feature>
<feature type="chain" id="PRO_0000327861" description="Aspartate--tRNA ligase, mitochondrial">
    <location>
        <begin position="62"/>
        <end position="692"/>
    </location>
</feature>
<feature type="region of interest" description="Aspartate" evidence="1">
    <location>
        <begin position="287"/>
        <end position="290"/>
    </location>
</feature>
<feature type="binding site" evidence="1">
    <location>
        <position position="264"/>
    </location>
    <ligand>
        <name>L-aspartate</name>
        <dbReference type="ChEBI" id="CHEBI:29991"/>
    </ligand>
</feature>
<feature type="binding site" evidence="1">
    <location>
        <begin position="309"/>
        <end position="311"/>
    </location>
    <ligand>
        <name>ATP</name>
        <dbReference type="ChEBI" id="CHEBI:30616"/>
    </ligand>
</feature>
<feature type="binding site" evidence="1">
    <location>
        <position position="309"/>
    </location>
    <ligand>
        <name>L-aspartate</name>
        <dbReference type="ChEBI" id="CHEBI:29991"/>
    </ligand>
</feature>
<feature type="binding site" evidence="1">
    <location>
        <position position="590"/>
    </location>
    <ligand>
        <name>ATP</name>
        <dbReference type="ChEBI" id="CHEBI:30616"/>
    </ligand>
</feature>
<feature type="binding site" evidence="1">
    <location>
        <position position="597"/>
    </location>
    <ligand>
        <name>L-aspartate</name>
        <dbReference type="ChEBI" id="CHEBI:29991"/>
    </ligand>
</feature>
<feature type="binding site" evidence="1">
    <location>
        <begin position="642"/>
        <end position="645"/>
    </location>
    <ligand>
        <name>ATP</name>
        <dbReference type="ChEBI" id="CHEBI:30616"/>
    </ligand>
</feature>
<keyword id="KW-0030">Aminoacyl-tRNA synthetase</keyword>
<keyword id="KW-0067">ATP-binding</keyword>
<keyword id="KW-0436">Ligase</keyword>
<keyword id="KW-0496">Mitochondrion</keyword>
<keyword id="KW-0547">Nucleotide-binding</keyword>
<keyword id="KW-0648">Protein biosynthesis</keyword>
<keyword id="KW-1185">Reference proteome</keyword>
<keyword id="KW-0809">Transit peptide</keyword>
<protein>
    <recommendedName>
        <fullName>Aspartate--tRNA ligase, mitochondrial</fullName>
        <ecNumber>6.1.1.12</ecNumber>
    </recommendedName>
    <alternativeName>
        <fullName>Aspartyl-tRNA synthetase</fullName>
        <shortName>AspRS</shortName>
    </alternativeName>
</protein>
<sequence length="692" mass="79277">MNRVILKDSKIFLNVLNKPIIKNKNCLSLLNITTSSTTSIIKNQQINQFNKRNFTNTINNNKNENINNKILNIIERSHSCGEITSKDIGKEVIIYGWINSLRNLGDNVFLVIRDGHGKVQCYVDLKQQCILKSSVPNIDINERNSIEENIKLFKLESIVSIKGKVIARPERMVNKNMSTGEIEISVDQLQLLNNCVDLPFTVEHDSTAVSEELRLKYRYVDLRRDKVQSNIRLRSKVAMAARNYLINQQFIEVETPTLFRPTPEGAREYLVPTRHQGQFYSLPQSPQQYKQLLMVGGIDRYFQLARCYRDEDLRSDRQPEFTQIDMELSFVNTQMIYRIIEGLVKTLWKEAGFNIDYEFPFYTYEQVLSTYGIDKPDTRYDMKLVDITDCFNKDETNINLFKNALSQASNNFKESKPVIKCIKLDQVLPTLKSKHLDQITTESNSIITVQIKSNNEWKSLISKSISEQEKTLITERMNLKEGDVLLISVGPRFQVESTLGKTRIYCANLLKELNLLKLDPQQFNFLWVVDFPLFTPSDYMNEQSALLSTHHPFTAPHPEDIDLLLNPLSTPSDYSKIRGQHYDIVINGVELGGGSIRIHNSDVQLRVLEKVLKLEPHMVQRFNHLLTALSMGCPPHGGIALGFDRLCSLLVNSNSIRDVIAFPKTSGGKELMTSSPATVTKSELDELFLIQK</sequence>
<dbReference type="EC" id="6.1.1.12"/>
<dbReference type="EMBL" id="AAFI02000005">
    <property type="protein sequence ID" value="EAL72426.1"/>
    <property type="molecule type" value="Genomic_DNA"/>
</dbReference>
<dbReference type="RefSeq" id="XP_646582.1">
    <property type="nucleotide sequence ID" value="XM_641490.1"/>
</dbReference>
<dbReference type="SMR" id="Q55C99"/>
<dbReference type="FunCoup" id="Q55C99">
    <property type="interactions" value="580"/>
</dbReference>
<dbReference type="STRING" id="44689.Q55C99"/>
<dbReference type="GlyGen" id="Q55C99">
    <property type="glycosylation" value="1 site"/>
</dbReference>
<dbReference type="PaxDb" id="44689-DDB0231311"/>
<dbReference type="EnsemblProtists" id="EAL72426">
    <property type="protein sequence ID" value="EAL72426"/>
    <property type="gene ID" value="DDB_G0270152"/>
</dbReference>
<dbReference type="GeneID" id="8617552"/>
<dbReference type="KEGG" id="ddi:DDB_G0270152"/>
<dbReference type="dictyBase" id="DDB_G0270152">
    <property type="gene designation" value="maspS"/>
</dbReference>
<dbReference type="VEuPathDB" id="AmoebaDB:DDB_G0270152"/>
<dbReference type="eggNOG" id="KOG2411">
    <property type="taxonomic scope" value="Eukaryota"/>
</dbReference>
<dbReference type="HOGENOM" id="CLU_014330_3_2_1"/>
<dbReference type="InParanoid" id="Q55C99"/>
<dbReference type="OMA" id="LCGWVDR"/>
<dbReference type="PhylomeDB" id="Q55C99"/>
<dbReference type="PRO" id="PR:Q55C99"/>
<dbReference type="Proteomes" id="UP000002195">
    <property type="component" value="Chromosome 1"/>
</dbReference>
<dbReference type="GO" id="GO:0005759">
    <property type="term" value="C:mitochondrial matrix"/>
    <property type="evidence" value="ECO:0007669"/>
    <property type="project" value="UniProtKB-SubCell"/>
</dbReference>
<dbReference type="GO" id="GO:0005739">
    <property type="term" value="C:mitochondrion"/>
    <property type="evidence" value="ECO:0000250"/>
    <property type="project" value="dictyBase"/>
</dbReference>
<dbReference type="GO" id="GO:0004815">
    <property type="term" value="F:aspartate-tRNA ligase activity"/>
    <property type="evidence" value="ECO:0000250"/>
    <property type="project" value="dictyBase"/>
</dbReference>
<dbReference type="GO" id="GO:0005524">
    <property type="term" value="F:ATP binding"/>
    <property type="evidence" value="ECO:0007669"/>
    <property type="project" value="UniProtKB-KW"/>
</dbReference>
<dbReference type="GO" id="GO:0003676">
    <property type="term" value="F:nucleic acid binding"/>
    <property type="evidence" value="ECO:0007669"/>
    <property type="project" value="InterPro"/>
</dbReference>
<dbReference type="GO" id="GO:0006422">
    <property type="term" value="P:aspartyl-tRNA aminoacylation"/>
    <property type="evidence" value="ECO:0000250"/>
    <property type="project" value="dictyBase"/>
</dbReference>
<dbReference type="CDD" id="cd00777">
    <property type="entry name" value="AspRS_core"/>
    <property type="match status" value="1"/>
</dbReference>
<dbReference type="CDD" id="cd04317">
    <property type="entry name" value="EcAspRS_like_N"/>
    <property type="match status" value="1"/>
</dbReference>
<dbReference type="FunFam" id="2.40.50.140:FF:000341">
    <property type="entry name" value="aspartate--tRNA ligase, mitochondrial isoform X2"/>
    <property type="match status" value="1"/>
</dbReference>
<dbReference type="Gene3D" id="3.30.930.10">
    <property type="entry name" value="Bira Bifunctional Protein, Domain 2"/>
    <property type="match status" value="1"/>
</dbReference>
<dbReference type="Gene3D" id="3.30.1360.30">
    <property type="entry name" value="GAD-like domain"/>
    <property type="match status" value="1"/>
</dbReference>
<dbReference type="Gene3D" id="2.40.50.140">
    <property type="entry name" value="Nucleic acid-binding proteins"/>
    <property type="match status" value="1"/>
</dbReference>
<dbReference type="HAMAP" id="MF_00044">
    <property type="entry name" value="Asp_tRNA_synth_type1"/>
    <property type="match status" value="1"/>
</dbReference>
<dbReference type="InterPro" id="IPR004364">
    <property type="entry name" value="Aa-tRNA-synt_II"/>
</dbReference>
<dbReference type="InterPro" id="IPR006195">
    <property type="entry name" value="aa-tRNA-synth_II"/>
</dbReference>
<dbReference type="InterPro" id="IPR045864">
    <property type="entry name" value="aa-tRNA-synth_II/BPL/LPL"/>
</dbReference>
<dbReference type="InterPro" id="IPR004524">
    <property type="entry name" value="Asp-tRNA-ligase_1"/>
</dbReference>
<dbReference type="InterPro" id="IPR047089">
    <property type="entry name" value="Asp-tRNA-ligase_1_N"/>
</dbReference>
<dbReference type="InterPro" id="IPR002312">
    <property type="entry name" value="Asp/Asn-tRNA-synth_IIb"/>
</dbReference>
<dbReference type="InterPro" id="IPR047090">
    <property type="entry name" value="AspRS_core"/>
</dbReference>
<dbReference type="InterPro" id="IPR004115">
    <property type="entry name" value="GAD-like_sf"/>
</dbReference>
<dbReference type="InterPro" id="IPR012340">
    <property type="entry name" value="NA-bd_OB-fold"/>
</dbReference>
<dbReference type="InterPro" id="IPR004365">
    <property type="entry name" value="NA-bd_OB_tRNA"/>
</dbReference>
<dbReference type="NCBIfam" id="TIGR00459">
    <property type="entry name" value="aspS_bact"/>
    <property type="match status" value="1"/>
</dbReference>
<dbReference type="NCBIfam" id="NF001750">
    <property type="entry name" value="PRK00476.1"/>
    <property type="match status" value="1"/>
</dbReference>
<dbReference type="PANTHER" id="PTHR22594:SF5">
    <property type="entry name" value="ASPARTATE--TRNA LIGASE, MITOCHONDRIAL"/>
    <property type="match status" value="1"/>
</dbReference>
<dbReference type="PANTHER" id="PTHR22594">
    <property type="entry name" value="ASPARTYL/LYSYL-TRNA SYNTHETASE"/>
    <property type="match status" value="1"/>
</dbReference>
<dbReference type="Pfam" id="PF00152">
    <property type="entry name" value="tRNA-synt_2"/>
    <property type="match status" value="1"/>
</dbReference>
<dbReference type="Pfam" id="PF01336">
    <property type="entry name" value="tRNA_anti-codon"/>
    <property type="match status" value="1"/>
</dbReference>
<dbReference type="PRINTS" id="PR01042">
    <property type="entry name" value="TRNASYNTHASP"/>
</dbReference>
<dbReference type="SUPFAM" id="SSF55681">
    <property type="entry name" value="Class II aaRS and biotin synthetases"/>
    <property type="match status" value="1"/>
</dbReference>
<dbReference type="SUPFAM" id="SSF55261">
    <property type="entry name" value="GAD domain-like"/>
    <property type="match status" value="1"/>
</dbReference>
<dbReference type="SUPFAM" id="SSF50249">
    <property type="entry name" value="Nucleic acid-binding proteins"/>
    <property type="match status" value="1"/>
</dbReference>
<dbReference type="PROSITE" id="PS50862">
    <property type="entry name" value="AA_TRNA_LIGASE_II"/>
    <property type="match status" value="1"/>
</dbReference>
<proteinExistence type="inferred from homology"/>